<protein>
    <recommendedName>
        <fullName>G-protein coupled receptor 183-A</fullName>
    </recommendedName>
</protein>
<evidence type="ECO:0000250" key="1">
    <source>
        <dbReference type="UniProtKB" id="P32249"/>
    </source>
</evidence>
<evidence type="ECO:0000250" key="2">
    <source>
        <dbReference type="UniProtKB" id="Q3U6B2"/>
    </source>
</evidence>
<evidence type="ECO:0000255" key="3"/>
<evidence type="ECO:0000255" key="4">
    <source>
        <dbReference type="PROSITE-ProRule" id="PRU00521"/>
    </source>
</evidence>
<keyword id="KW-1064">Adaptive immunity</keyword>
<keyword id="KW-1003">Cell membrane</keyword>
<keyword id="KW-1015">Disulfide bond</keyword>
<keyword id="KW-0297">G-protein coupled receptor</keyword>
<keyword id="KW-0325">Glycoprotein</keyword>
<keyword id="KW-0391">Immunity</keyword>
<keyword id="KW-0472">Membrane</keyword>
<keyword id="KW-0675">Receptor</keyword>
<keyword id="KW-1185">Reference proteome</keyword>
<keyword id="KW-0807">Transducer</keyword>
<keyword id="KW-0812">Transmembrane</keyword>
<keyword id="KW-1133">Transmembrane helix</keyword>
<dbReference type="EMBL" id="BC142876">
    <property type="protein sequence ID" value="AAI42877.1"/>
    <property type="molecule type" value="mRNA"/>
</dbReference>
<dbReference type="RefSeq" id="NP_001092711.1">
    <property type="nucleotide sequence ID" value="NM_001099241.1"/>
</dbReference>
<dbReference type="SMR" id="A5PLE7"/>
<dbReference type="FunCoup" id="A5PLE7">
    <property type="interactions" value="487"/>
</dbReference>
<dbReference type="STRING" id="7955.ENSDARP00000010296"/>
<dbReference type="GlyCosmos" id="A5PLE7">
    <property type="glycosylation" value="2 sites, No reported glycans"/>
</dbReference>
<dbReference type="PaxDb" id="7955-ENSDARP00000010296"/>
<dbReference type="GeneID" id="556770"/>
<dbReference type="KEGG" id="dre:556770"/>
<dbReference type="AGR" id="ZFIN:ZDB-GENE-070615-28"/>
<dbReference type="CTD" id="556770"/>
<dbReference type="ZFIN" id="ZDB-GENE-070615-28">
    <property type="gene designation" value="gpr183a"/>
</dbReference>
<dbReference type="eggNOG" id="ENOG502QWD9">
    <property type="taxonomic scope" value="Eukaryota"/>
</dbReference>
<dbReference type="InParanoid" id="A5PLE7"/>
<dbReference type="OrthoDB" id="10021141at2759"/>
<dbReference type="PhylomeDB" id="A5PLE7"/>
<dbReference type="Reactome" id="R-DRE-373076">
    <property type="pathway name" value="Class A/1 (Rhodopsin-like receptors)"/>
</dbReference>
<dbReference type="Reactome" id="R-DRE-418594">
    <property type="pathway name" value="G alpha (i) signalling events"/>
</dbReference>
<dbReference type="PRO" id="PR:A5PLE7"/>
<dbReference type="Proteomes" id="UP000000437">
    <property type="component" value="Chromosome 9"/>
</dbReference>
<dbReference type="GO" id="GO:0005886">
    <property type="term" value="C:plasma membrane"/>
    <property type="evidence" value="ECO:0000250"/>
    <property type="project" value="UniProtKB"/>
</dbReference>
<dbReference type="GO" id="GO:0004930">
    <property type="term" value="F:G protein-coupled receptor activity"/>
    <property type="evidence" value="ECO:0000250"/>
    <property type="project" value="UniProtKB"/>
</dbReference>
<dbReference type="GO" id="GO:0008142">
    <property type="term" value="F:oxysterol binding"/>
    <property type="evidence" value="ECO:0000250"/>
    <property type="project" value="UniProtKB"/>
</dbReference>
<dbReference type="GO" id="GO:0002250">
    <property type="term" value="P:adaptive immune response"/>
    <property type="evidence" value="ECO:0000250"/>
    <property type="project" value="UniProtKB"/>
</dbReference>
<dbReference type="GO" id="GO:0060216">
    <property type="term" value="P:definitive hemopoiesis"/>
    <property type="evidence" value="ECO:0000315"/>
    <property type="project" value="ZFIN"/>
</dbReference>
<dbReference type="GO" id="GO:0002407">
    <property type="term" value="P:dendritic cell chemotaxis"/>
    <property type="evidence" value="ECO:0000250"/>
    <property type="project" value="UniProtKB"/>
</dbReference>
<dbReference type="GO" id="GO:0036145">
    <property type="term" value="P:dendritic cell homeostasis"/>
    <property type="evidence" value="ECO:0000250"/>
    <property type="project" value="UniProtKB"/>
</dbReference>
<dbReference type="GO" id="GO:0098508">
    <property type="term" value="P:endothelial to hematopoietic transition"/>
    <property type="evidence" value="ECO:0000315"/>
    <property type="project" value="ZFIN"/>
</dbReference>
<dbReference type="GO" id="GO:0007186">
    <property type="term" value="P:G protein-coupled receptor signaling pathway"/>
    <property type="evidence" value="ECO:0000250"/>
    <property type="project" value="UniProtKB"/>
</dbReference>
<dbReference type="GO" id="GO:0030595">
    <property type="term" value="P:leukocyte chemotaxis"/>
    <property type="evidence" value="ECO:0000250"/>
    <property type="project" value="UniProtKB"/>
</dbReference>
<dbReference type="GO" id="GO:0045746">
    <property type="term" value="P:negative regulation of Notch signaling pathway"/>
    <property type="evidence" value="ECO:0000315"/>
    <property type="project" value="ZFIN"/>
</dbReference>
<dbReference type="GO" id="GO:0030316">
    <property type="term" value="P:osteoclast differentiation"/>
    <property type="evidence" value="ECO:0000250"/>
    <property type="project" value="UniProtKB"/>
</dbReference>
<dbReference type="GO" id="GO:0070374">
    <property type="term" value="P:positive regulation of ERK1 and ERK2 cascade"/>
    <property type="evidence" value="ECO:0000250"/>
    <property type="project" value="UniProtKB"/>
</dbReference>
<dbReference type="GO" id="GO:2000458">
    <property type="term" value="P:regulation of astrocyte chemotaxis"/>
    <property type="evidence" value="ECO:0000250"/>
    <property type="project" value="UniProtKB"/>
</dbReference>
<dbReference type="GO" id="GO:0010818">
    <property type="term" value="P:T cell chemotaxis"/>
    <property type="evidence" value="ECO:0000250"/>
    <property type="project" value="UniProtKB"/>
</dbReference>
<dbReference type="GO" id="GO:0061470">
    <property type="term" value="P:T follicular helper cell differentiation"/>
    <property type="evidence" value="ECO:0000250"/>
    <property type="project" value="UniProtKB"/>
</dbReference>
<dbReference type="CDD" id="cd15159">
    <property type="entry name" value="7tmA_EBI2"/>
    <property type="match status" value="1"/>
</dbReference>
<dbReference type="FunFam" id="1.20.1070.10:FF:000017">
    <property type="entry name" value="lysophosphatidic acid receptor 4"/>
    <property type="match status" value="1"/>
</dbReference>
<dbReference type="Gene3D" id="1.20.1070.10">
    <property type="entry name" value="Rhodopsin 7-helix transmembrane proteins"/>
    <property type="match status" value="1"/>
</dbReference>
<dbReference type="InterPro" id="IPR047160">
    <property type="entry name" value="GP183-like"/>
</dbReference>
<dbReference type="InterPro" id="IPR000276">
    <property type="entry name" value="GPCR_Rhodpsn"/>
</dbReference>
<dbReference type="InterPro" id="IPR017452">
    <property type="entry name" value="GPCR_Rhodpsn_7TM"/>
</dbReference>
<dbReference type="PANTHER" id="PTHR24237">
    <property type="entry name" value="G-PROTEIN COUPLED RECEPTOR"/>
    <property type="match status" value="1"/>
</dbReference>
<dbReference type="PANTHER" id="PTHR24237:SF7">
    <property type="entry name" value="G-PROTEIN COUPLED RECEPTOR 183"/>
    <property type="match status" value="1"/>
</dbReference>
<dbReference type="Pfam" id="PF00001">
    <property type="entry name" value="7tm_1"/>
    <property type="match status" value="1"/>
</dbReference>
<dbReference type="PRINTS" id="PR00237">
    <property type="entry name" value="GPCRRHODOPSN"/>
</dbReference>
<dbReference type="PRINTS" id="PR01157">
    <property type="entry name" value="P2YPURNOCPTR"/>
</dbReference>
<dbReference type="SUPFAM" id="SSF81321">
    <property type="entry name" value="Family A G protein-coupled receptor-like"/>
    <property type="match status" value="1"/>
</dbReference>
<dbReference type="PROSITE" id="PS00237">
    <property type="entry name" value="G_PROTEIN_RECEP_F1_1"/>
    <property type="match status" value="1"/>
</dbReference>
<dbReference type="PROSITE" id="PS50262">
    <property type="entry name" value="G_PROTEIN_RECEP_F1_2"/>
    <property type="match status" value="1"/>
</dbReference>
<reference key="1">
    <citation type="submission" date="2007-06" db="EMBL/GenBank/DDBJ databases">
        <authorList>
            <consortium name="NIH - Zebrafish Gene Collection (ZGC) project"/>
        </authorList>
    </citation>
    <scope>NUCLEOTIDE SEQUENCE [LARGE SCALE MRNA]</scope>
    <source>
        <tissue>Intestine</tissue>
    </source>
</reference>
<organism>
    <name type="scientific">Danio rerio</name>
    <name type="common">Zebrafish</name>
    <name type="synonym">Brachydanio rerio</name>
    <dbReference type="NCBI Taxonomy" id="7955"/>
    <lineage>
        <taxon>Eukaryota</taxon>
        <taxon>Metazoa</taxon>
        <taxon>Chordata</taxon>
        <taxon>Craniata</taxon>
        <taxon>Vertebrata</taxon>
        <taxon>Euteleostomi</taxon>
        <taxon>Actinopterygii</taxon>
        <taxon>Neopterygii</taxon>
        <taxon>Teleostei</taxon>
        <taxon>Ostariophysi</taxon>
        <taxon>Cypriniformes</taxon>
        <taxon>Danionidae</taxon>
        <taxon>Danioninae</taxon>
        <taxon>Danio</taxon>
    </lineage>
</organism>
<comment type="function">
    <text evidence="1 2">G-protein coupled receptor expressed in lymphocytes that acts as a chemotactic receptor for B-cells, T-cells, splenic dendritic cells, monocytes/macrophages and astrocytes (By similarity). Receptor for oxysterol 7-alpha,25-dihydroxycholesterol (7-alpha,25-OHC) and other related oxysterols (By similarity). Mediates cell positioning and movement of a number of cells by binding the 7-alpha,25-OHC ligand that forms a chemotactic gradient (By similarity). Binding of 7-alpha,25-OHC mediates the correct localization of B-cells during humoral immune responses (By similarity).</text>
</comment>
<comment type="subcellular location">
    <subcellularLocation>
        <location evidence="1">Cell membrane</location>
        <topology evidence="3">Multi-pass membrane protein</topology>
    </subcellularLocation>
</comment>
<comment type="similarity">
    <text evidence="4">Belongs to the G-protein coupled receptor 1 family.</text>
</comment>
<sequence>METTSANFTQNDSNVCTNLYNHRGWAQYFLPAMYSLICIVGLLGNVLALHVIWPNLKKINSTTLYSANLVVSDILFSLALPLRVVYYARGFDWPMGEGLCKAVALLFYINMYAGVNFMTCLSVDRFIAVVLPLRFSRFRKVQKVRYICGVVWVVVLMQTLPLLSMPMTNIEQSGHITCMEYPNFEKIDNLPVMLIGAVVLGFGIPVITILVCYTALCLKLRHLAKSNKLTEKSGRSSKAIGVICTVILVFVVCYSPYHVDLLQYMIKKLRYDPDCSELHKFQISLHITVCFMNLNSCLDPFIYFFACKGYKKKVLKLLKKQVSMSFSSVVRTSPEGSSKDVFGNDKIQMNSRSFQKERSSVLLNSLEQ</sequence>
<feature type="chain" id="PRO_0000383156" description="G-protein coupled receptor 183-A">
    <location>
        <begin position="1"/>
        <end position="368"/>
    </location>
</feature>
<feature type="topological domain" description="Extracellular" evidence="3">
    <location>
        <begin position="1"/>
        <end position="27"/>
    </location>
</feature>
<feature type="transmembrane region" description="Helical; Name=1" evidence="3">
    <location>
        <begin position="28"/>
        <end position="53"/>
    </location>
</feature>
<feature type="topological domain" description="Cytoplasmic" evidence="3">
    <location>
        <begin position="54"/>
        <end position="73"/>
    </location>
</feature>
<feature type="transmembrane region" description="Helical; Name=2" evidence="3">
    <location>
        <begin position="74"/>
        <end position="91"/>
    </location>
</feature>
<feature type="topological domain" description="Extracellular" evidence="3">
    <location>
        <begin position="92"/>
        <end position="101"/>
    </location>
</feature>
<feature type="transmembrane region" description="Helical; Name=3" evidence="3">
    <location>
        <begin position="102"/>
        <end position="123"/>
    </location>
</feature>
<feature type="topological domain" description="Cytoplasmic" evidence="3">
    <location>
        <begin position="124"/>
        <end position="145"/>
    </location>
</feature>
<feature type="transmembrane region" description="Helical; Name=4" evidence="3">
    <location>
        <begin position="146"/>
        <end position="164"/>
    </location>
</feature>
<feature type="topological domain" description="Extracellular" evidence="3">
    <location>
        <begin position="165"/>
        <end position="189"/>
    </location>
</feature>
<feature type="transmembrane region" description="Helical; Name=5" evidence="3">
    <location>
        <begin position="190"/>
        <end position="212"/>
    </location>
</feature>
<feature type="topological domain" description="Cytoplasmic" evidence="3">
    <location>
        <begin position="213"/>
        <end position="238"/>
    </location>
</feature>
<feature type="transmembrane region" description="Helical; Name=6" evidence="3">
    <location>
        <begin position="239"/>
        <end position="262"/>
    </location>
</feature>
<feature type="topological domain" description="Extracellular" evidence="3">
    <location>
        <begin position="263"/>
        <end position="282"/>
    </location>
</feature>
<feature type="transmembrane region" description="Helical; Name=7" evidence="3">
    <location>
        <begin position="283"/>
        <end position="307"/>
    </location>
</feature>
<feature type="topological domain" description="Cytoplasmic" evidence="3">
    <location>
        <begin position="308"/>
        <end position="368"/>
    </location>
</feature>
<feature type="glycosylation site" description="N-linked (GlcNAc...) asparagine" evidence="3">
    <location>
        <position position="7"/>
    </location>
</feature>
<feature type="glycosylation site" description="N-linked (GlcNAc...) asparagine" evidence="3">
    <location>
        <position position="11"/>
    </location>
</feature>
<feature type="disulfide bond" evidence="4">
    <location>
        <begin position="100"/>
        <end position="178"/>
    </location>
</feature>
<accession>A5PLE7</accession>
<gene>
    <name type="primary">gpr183a</name>
    <name type="synonym">gpr183</name>
    <name type="ORF">zgc:165579</name>
</gene>
<proteinExistence type="evidence at transcript level"/>
<name>GP83A_DANRE</name>